<proteinExistence type="evidence at protein level"/>
<sequence>AVVPASTVKTALAYTYPIHPYHSVYAHPHSVVIY</sequence>
<dbReference type="GO" id="GO:0042302">
    <property type="term" value="F:structural constituent of cuticle"/>
    <property type="evidence" value="ECO:0007669"/>
    <property type="project" value="UniProtKB-KW"/>
</dbReference>
<reference key="1">
    <citation type="journal article" date="2000" name="Insect Biochem. Mol. Biol.">
        <title>Studies on proteins in post-ecdysial nymphal cuticle of locust, Locusta migratoria, and cockroach, Blaberus craniifer.</title>
        <authorList>
            <person name="Andersen S.O."/>
        </authorList>
    </citation>
    <scope>PROTEIN SEQUENCE</scope>
    <scope>MASS SPECTROMETRY</scope>
    <source>
        <tissue>Fifth instar larvae</tissue>
    </source>
</reference>
<organism>
    <name type="scientific">Blaberus craniifer</name>
    <name type="common">Death's head cockroach</name>
    <dbReference type="NCBI Taxonomy" id="6982"/>
    <lineage>
        <taxon>Eukaryota</taxon>
        <taxon>Metazoa</taxon>
        <taxon>Ecdysozoa</taxon>
        <taxon>Arthropoda</taxon>
        <taxon>Hexapoda</taxon>
        <taxon>Insecta</taxon>
        <taxon>Pterygota</taxon>
        <taxon>Neoptera</taxon>
        <taxon>Polyneoptera</taxon>
        <taxon>Dictyoptera</taxon>
        <taxon>Blattodea</taxon>
        <taxon>Blaberoidea</taxon>
        <taxon>Blaberidae</taxon>
        <taxon>Blaberinae</taxon>
        <taxon>Blaberus</taxon>
    </lineage>
</organism>
<name>CUO9_BLACR</name>
<keyword id="KW-0193">Cuticle</keyword>
<keyword id="KW-0903">Direct protein sequencing</keyword>
<keyword id="KW-0677">Repeat</keyword>
<protein>
    <recommendedName>
        <fullName>Cuticle protein 9</fullName>
    </recommendedName>
    <alternativeName>
        <fullName>BcNCP3.8</fullName>
    </alternativeName>
</protein>
<evidence type="ECO:0000269" key="1">
    <source>
    </source>
</evidence>
<accession>P82122</accession>
<feature type="peptide" id="PRO_0000044695" description="Cuticle protein 9">
    <location>
        <begin position="1"/>
        <end position="34"/>
    </location>
</feature>
<comment type="developmental stage">
    <text>Expressed in post-ecdysial nymphs.</text>
</comment>
<comment type="mass spectrometry"/>